<name>AAAS_MOUSE</name>
<feature type="initiator methionine" description="Removed" evidence="1">
    <location>
        <position position="1"/>
    </location>
</feature>
<feature type="chain" id="PRO_0000050829" description="Aladin">
    <location>
        <begin position="2"/>
        <end position="546"/>
    </location>
</feature>
<feature type="repeat" description="WD 1">
    <location>
        <begin position="149"/>
        <end position="188"/>
    </location>
</feature>
<feature type="repeat" description="WD 2">
    <location>
        <begin position="191"/>
        <end position="230"/>
    </location>
</feature>
<feature type="repeat" description="WD 3">
    <location>
        <begin position="243"/>
        <end position="282"/>
    </location>
</feature>
<feature type="repeat" description="WD 4">
    <location>
        <begin position="285"/>
        <end position="324"/>
    </location>
</feature>
<feature type="region of interest" description="Disordered" evidence="3">
    <location>
        <begin position="500"/>
        <end position="546"/>
    </location>
</feature>
<feature type="short sequence motif" description="Microbody targeting signal" evidence="2">
    <location>
        <begin position="544"/>
        <end position="546"/>
    </location>
</feature>
<feature type="compositionally biased region" description="Low complexity" evidence="3">
    <location>
        <begin position="534"/>
        <end position="546"/>
    </location>
</feature>
<feature type="modified residue" description="N-acetylcysteine" evidence="1">
    <location>
        <position position="2"/>
    </location>
</feature>
<feature type="modified residue" description="Phosphoserine" evidence="1">
    <location>
        <position position="33"/>
    </location>
</feature>
<feature type="modified residue" description="Phosphoserine" evidence="5 6">
    <location>
        <position position="495"/>
    </location>
</feature>
<feature type="modified residue" description="Phosphoserine" evidence="6">
    <location>
        <position position="511"/>
    </location>
</feature>
<feature type="modified residue" description="Phosphoserine" evidence="6">
    <location>
        <position position="522"/>
    </location>
</feature>
<feature type="modified residue" description="Phosphoserine" evidence="6">
    <location>
        <position position="525"/>
    </location>
</feature>
<feature type="modified residue" description="Phosphoserine" evidence="6">
    <location>
        <position position="541"/>
    </location>
</feature>
<dbReference type="EMBL" id="AK034591">
    <property type="protein sequence ID" value="BAC28764.1"/>
    <property type="molecule type" value="mRNA"/>
</dbReference>
<dbReference type="EMBL" id="AK083537">
    <property type="protein sequence ID" value="BAC38945.1"/>
    <property type="molecule type" value="mRNA"/>
</dbReference>
<dbReference type="EMBL" id="AK134406">
    <property type="protein sequence ID" value="BAE22131.1"/>
    <property type="molecule type" value="mRNA"/>
</dbReference>
<dbReference type="EMBL" id="AK165243">
    <property type="protein sequence ID" value="BAE38099.1"/>
    <property type="molecule type" value="mRNA"/>
</dbReference>
<dbReference type="EMBL" id="AK166118">
    <property type="protein sequence ID" value="BAE38581.1"/>
    <property type="molecule type" value="mRNA"/>
</dbReference>
<dbReference type="EMBL" id="BC018191">
    <property type="protein sequence ID" value="AAH18191.1"/>
    <property type="molecule type" value="mRNA"/>
</dbReference>
<dbReference type="CCDS" id="CCDS27880.1"/>
<dbReference type="RefSeq" id="NP_700465.2">
    <property type="nucleotide sequence ID" value="NM_153416.2"/>
</dbReference>
<dbReference type="SMR" id="P58742"/>
<dbReference type="BioGRID" id="230214">
    <property type="interactions" value="10"/>
</dbReference>
<dbReference type="ComplexPortal" id="CPX-4474">
    <property type="entry name" value="Nuclear pore complex"/>
</dbReference>
<dbReference type="FunCoup" id="P58742">
    <property type="interactions" value="3941"/>
</dbReference>
<dbReference type="IntAct" id="P58742">
    <property type="interactions" value="1"/>
</dbReference>
<dbReference type="STRING" id="10090.ENSMUSP00000044604"/>
<dbReference type="GlyGen" id="P58742">
    <property type="glycosylation" value="1 site, 1 O-linked glycan (1 site)"/>
</dbReference>
<dbReference type="iPTMnet" id="P58742"/>
<dbReference type="PhosphoSitePlus" id="P58742"/>
<dbReference type="SwissPalm" id="P58742"/>
<dbReference type="jPOST" id="P58742"/>
<dbReference type="PaxDb" id="10090-ENSMUSP00000044604"/>
<dbReference type="PeptideAtlas" id="P58742"/>
<dbReference type="ProteomicsDB" id="285624"/>
<dbReference type="Pumba" id="P58742"/>
<dbReference type="Antibodypedia" id="27006">
    <property type="antibodies" value="262 antibodies from 32 providers"/>
</dbReference>
<dbReference type="Ensembl" id="ENSMUST00000041208.9">
    <property type="protein sequence ID" value="ENSMUSP00000044604.8"/>
    <property type="gene ID" value="ENSMUSG00000036678.9"/>
</dbReference>
<dbReference type="GeneID" id="223921"/>
<dbReference type="KEGG" id="mmu:223921"/>
<dbReference type="UCSC" id="uc007xvk.2">
    <property type="organism name" value="mouse"/>
</dbReference>
<dbReference type="AGR" id="MGI:2443767"/>
<dbReference type="CTD" id="8086"/>
<dbReference type="MGI" id="MGI:2443767">
    <property type="gene designation" value="Aaas"/>
</dbReference>
<dbReference type="VEuPathDB" id="HostDB:ENSMUSG00000036678"/>
<dbReference type="eggNOG" id="KOG2139">
    <property type="taxonomic scope" value="Eukaryota"/>
</dbReference>
<dbReference type="GeneTree" id="ENSGT00390000009446"/>
<dbReference type="HOGENOM" id="CLU_027691_0_1_1"/>
<dbReference type="InParanoid" id="P58742"/>
<dbReference type="OMA" id="FQPLYKD"/>
<dbReference type="OrthoDB" id="411991at2759"/>
<dbReference type="PhylomeDB" id="P58742"/>
<dbReference type="TreeFam" id="TF324412"/>
<dbReference type="Reactome" id="R-MMU-159227">
    <property type="pathway name" value="Transport of the SLBP independent Mature mRNA"/>
</dbReference>
<dbReference type="Reactome" id="R-MMU-159230">
    <property type="pathway name" value="Transport of the SLBP Dependant Mature mRNA"/>
</dbReference>
<dbReference type="Reactome" id="R-MMU-159231">
    <property type="pathway name" value="Transport of Mature mRNA Derived from an Intronless Transcript"/>
</dbReference>
<dbReference type="Reactome" id="R-MMU-159236">
    <property type="pathway name" value="Transport of Mature mRNA derived from an Intron-Containing Transcript"/>
</dbReference>
<dbReference type="Reactome" id="R-MMU-170822">
    <property type="pathway name" value="Regulation of Glucokinase by Glucokinase Regulatory Protein"/>
</dbReference>
<dbReference type="Reactome" id="R-MMU-191859">
    <property type="pathway name" value="snRNP Assembly"/>
</dbReference>
<dbReference type="Reactome" id="R-MMU-3108214">
    <property type="pathway name" value="SUMOylation of DNA damage response and repair proteins"/>
</dbReference>
<dbReference type="Reactome" id="R-MMU-3232142">
    <property type="pathway name" value="SUMOylation of ubiquitinylation proteins"/>
</dbReference>
<dbReference type="Reactome" id="R-MMU-3301854">
    <property type="pathway name" value="Nuclear Pore Complex (NPC) Disassembly"/>
</dbReference>
<dbReference type="Reactome" id="R-MMU-3371453">
    <property type="pathway name" value="Regulation of HSF1-mediated heat shock response"/>
</dbReference>
<dbReference type="Reactome" id="R-MMU-4085377">
    <property type="pathway name" value="SUMOylation of SUMOylation proteins"/>
</dbReference>
<dbReference type="Reactome" id="R-MMU-4551638">
    <property type="pathway name" value="SUMOylation of chromatin organization proteins"/>
</dbReference>
<dbReference type="Reactome" id="R-MMU-4570464">
    <property type="pathway name" value="SUMOylation of RNA binding proteins"/>
</dbReference>
<dbReference type="Reactome" id="R-MMU-4615885">
    <property type="pathway name" value="SUMOylation of DNA replication proteins"/>
</dbReference>
<dbReference type="Reactome" id="R-MMU-5578749">
    <property type="pathway name" value="Transcriptional regulation by small RNAs"/>
</dbReference>
<dbReference type="Reactome" id="R-MMU-8980692">
    <property type="pathway name" value="RHOA GTPase cycle"/>
</dbReference>
<dbReference type="BioGRID-ORCS" id="223921">
    <property type="hits" value="7 hits in 76 CRISPR screens"/>
</dbReference>
<dbReference type="ChiTaRS" id="Aaas">
    <property type="organism name" value="mouse"/>
</dbReference>
<dbReference type="PRO" id="PR:P58742"/>
<dbReference type="Proteomes" id="UP000000589">
    <property type="component" value="Chromosome 15"/>
</dbReference>
<dbReference type="RNAct" id="P58742">
    <property type="molecule type" value="protein"/>
</dbReference>
<dbReference type="Bgee" id="ENSMUSG00000036678">
    <property type="expression patterns" value="Expressed in embryonic post-anal tail and 188 other cell types or tissues"/>
</dbReference>
<dbReference type="ExpressionAtlas" id="P58742">
    <property type="expression patterns" value="baseline and differential"/>
</dbReference>
<dbReference type="GO" id="GO:0005813">
    <property type="term" value="C:centrosome"/>
    <property type="evidence" value="ECO:0007669"/>
    <property type="project" value="Ensembl"/>
</dbReference>
<dbReference type="GO" id="GO:0005829">
    <property type="term" value="C:cytosol"/>
    <property type="evidence" value="ECO:0007669"/>
    <property type="project" value="Ensembl"/>
</dbReference>
<dbReference type="GO" id="GO:0072686">
    <property type="term" value="C:mitotic spindle"/>
    <property type="evidence" value="ECO:0000250"/>
    <property type="project" value="UniProtKB"/>
</dbReference>
<dbReference type="GO" id="GO:0005635">
    <property type="term" value="C:nuclear envelope"/>
    <property type="evidence" value="ECO:0000250"/>
    <property type="project" value="UniProtKB"/>
</dbReference>
<dbReference type="GO" id="GO:0031965">
    <property type="term" value="C:nuclear membrane"/>
    <property type="evidence" value="ECO:0007669"/>
    <property type="project" value="Ensembl"/>
</dbReference>
<dbReference type="GO" id="GO:0005643">
    <property type="term" value="C:nuclear pore"/>
    <property type="evidence" value="ECO:0000266"/>
    <property type="project" value="MGI"/>
</dbReference>
<dbReference type="GO" id="GO:0005654">
    <property type="term" value="C:nucleoplasm"/>
    <property type="evidence" value="ECO:0007669"/>
    <property type="project" value="Ensembl"/>
</dbReference>
<dbReference type="GO" id="GO:0000922">
    <property type="term" value="C:spindle pole"/>
    <property type="evidence" value="ECO:0000250"/>
    <property type="project" value="UniProtKB"/>
</dbReference>
<dbReference type="GO" id="GO:0009566">
    <property type="term" value="P:fertilization"/>
    <property type="evidence" value="ECO:0000315"/>
    <property type="project" value="MGI"/>
</dbReference>
<dbReference type="GO" id="GO:0006749">
    <property type="term" value="P:glutathione metabolic process"/>
    <property type="evidence" value="ECO:0000315"/>
    <property type="project" value="MGI"/>
</dbReference>
<dbReference type="GO" id="GO:0007612">
    <property type="term" value="P:learning"/>
    <property type="evidence" value="ECO:0000315"/>
    <property type="project" value="MGI"/>
</dbReference>
<dbReference type="GO" id="GO:0001578">
    <property type="term" value="P:microtubule bundle formation"/>
    <property type="evidence" value="ECO:0000250"/>
    <property type="project" value="UniProtKB"/>
</dbReference>
<dbReference type="GO" id="GO:0090307">
    <property type="term" value="P:mitotic spindle assembly"/>
    <property type="evidence" value="ECO:0007669"/>
    <property type="project" value="Ensembl"/>
</dbReference>
<dbReference type="GO" id="GO:0051028">
    <property type="term" value="P:mRNA transport"/>
    <property type="evidence" value="ECO:0007669"/>
    <property type="project" value="UniProtKB-KW"/>
</dbReference>
<dbReference type="GO" id="GO:0035264">
    <property type="term" value="P:multicellular organism growth"/>
    <property type="evidence" value="ECO:0000315"/>
    <property type="project" value="MGI"/>
</dbReference>
<dbReference type="GO" id="GO:0006913">
    <property type="term" value="P:nucleocytoplasmic transport"/>
    <property type="evidence" value="ECO:0000266"/>
    <property type="project" value="MGI"/>
</dbReference>
<dbReference type="GO" id="GO:0015031">
    <property type="term" value="P:protein transport"/>
    <property type="evidence" value="ECO:0007669"/>
    <property type="project" value="UniProtKB-KW"/>
</dbReference>
<dbReference type="GO" id="GO:0006979">
    <property type="term" value="P:response to oxidative stress"/>
    <property type="evidence" value="ECO:0000315"/>
    <property type="project" value="MGI"/>
</dbReference>
<dbReference type="FunFam" id="2.130.10.10:FF:000456">
    <property type="entry name" value="aladin isoform X3"/>
    <property type="match status" value="1"/>
</dbReference>
<dbReference type="Gene3D" id="2.130.10.10">
    <property type="entry name" value="YVTN repeat-like/Quinoprotein amine dehydrogenase"/>
    <property type="match status" value="1"/>
</dbReference>
<dbReference type="InterPro" id="IPR045139">
    <property type="entry name" value="Aladin"/>
</dbReference>
<dbReference type="InterPro" id="IPR015943">
    <property type="entry name" value="WD40/YVTN_repeat-like_dom_sf"/>
</dbReference>
<dbReference type="InterPro" id="IPR036322">
    <property type="entry name" value="WD40_repeat_dom_sf"/>
</dbReference>
<dbReference type="InterPro" id="IPR001680">
    <property type="entry name" value="WD40_rpt"/>
</dbReference>
<dbReference type="PANTHER" id="PTHR14494:SF0">
    <property type="entry name" value="ALADIN"/>
    <property type="match status" value="1"/>
</dbReference>
<dbReference type="PANTHER" id="PTHR14494">
    <property type="entry name" value="ALADIN/ADRACALIN/AAAS"/>
    <property type="match status" value="1"/>
</dbReference>
<dbReference type="Pfam" id="PF25460">
    <property type="entry name" value="Beta-prop_Aladin"/>
    <property type="match status" value="1"/>
</dbReference>
<dbReference type="SMART" id="SM00320">
    <property type="entry name" value="WD40"/>
    <property type="match status" value="4"/>
</dbReference>
<dbReference type="SUPFAM" id="SSF50978">
    <property type="entry name" value="WD40 repeat-like"/>
    <property type="match status" value="1"/>
</dbReference>
<dbReference type="PROSITE" id="PS00678">
    <property type="entry name" value="WD_REPEATS_1"/>
    <property type="match status" value="1"/>
</dbReference>
<dbReference type="PROSITE" id="PS50294">
    <property type="entry name" value="WD_REPEATS_REGION"/>
    <property type="match status" value="1"/>
</dbReference>
<organism>
    <name type="scientific">Mus musculus</name>
    <name type="common">Mouse</name>
    <dbReference type="NCBI Taxonomy" id="10090"/>
    <lineage>
        <taxon>Eukaryota</taxon>
        <taxon>Metazoa</taxon>
        <taxon>Chordata</taxon>
        <taxon>Craniata</taxon>
        <taxon>Vertebrata</taxon>
        <taxon>Euteleostomi</taxon>
        <taxon>Mammalia</taxon>
        <taxon>Eutheria</taxon>
        <taxon>Euarchontoglires</taxon>
        <taxon>Glires</taxon>
        <taxon>Rodentia</taxon>
        <taxon>Myomorpha</taxon>
        <taxon>Muroidea</taxon>
        <taxon>Muridae</taxon>
        <taxon>Murinae</taxon>
        <taxon>Mus</taxon>
        <taxon>Mus</taxon>
    </lineage>
</organism>
<comment type="function">
    <text evidence="1">Plays a role in the normal development of the peripheral and central nervous system. Required for the correct localization of aurora kinase AURKA and the microtubule minus end-binding protein NUMA1 as well as a subset of AURKA targets which ensures proper spindle formation and timely chromosome alignment.</text>
</comment>
<comment type="subunit">
    <text evidence="1">Interacts with NDC1, the interaction is required for nuclear pore localization. Interacts with the inactive form aurora kinase AURKA. Interacts with PGRMC2 (By similarity).</text>
</comment>
<comment type="subcellular location">
    <subcellularLocation>
        <location evidence="1">Nucleus</location>
        <location evidence="1">Nuclear pore complex</location>
    </subcellularLocation>
    <subcellularLocation>
        <location evidence="1">Cytoplasm</location>
        <location evidence="1">Cytoskeleton</location>
        <location evidence="1">Spindle pole</location>
    </subcellularLocation>
    <subcellularLocation>
        <location evidence="1">Nucleus envelope</location>
    </subcellularLocation>
    <text evidence="1">In metaphase cells localizes within the spindle with some accumulation around spindle poles, with the highest concentration between the centrosome and metaphase plate. The localization to the spindle is microtubule-mediated.</text>
</comment>
<comment type="tissue specificity">
    <text evidence="1">Widely expressed. Particularly abundant in cerebellum, corpus callosum, adrenal gland, pituitary gland, gastrointestinal structures and fetal lung.</text>
</comment>
<comment type="disruption phenotype">
    <text evidence="4">Female mutants are sterile due to delayed oocyte maturation and meiotic spindle assembly.</text>
</comment>
<gene>
    <name type="primary">Aaas</name>
</gene>
<accession>P58742</accession>
<accession>Q544M6</accession>
<keyword id="KW-0007">Acetylation</keyword>
<keyword id="KW-0963">Cytoplasm</keyword>
<keyword id="KW-0206">Cytoskeleton</keyword>
<keyword id="KW-0509">mRNA transport</keyword>
<keyword id="KW-0906">Nuclear pore complex</keyword>
<keyword id="KW-0539">Nucleus</keyword>
<keyword id="KW-0597">Phosphoprotein</keyword>
<keyword id="KW-0653">Protein transport</keyword>
<keyword id="KW-1185">Reference proteome</keyword>
<keyword id="KW-0677">Repeat</keyword>
<keyword id="KW-0811">Translocation</keyword>
<keyword id="KW-0813">Transport</keyword>
<keyword id="KW-0853">WD repeat</keyword>
<protein>
    <recommendedName>
        <fullName>Aladin</fullName>
    </recommendedName>
    <alternativeName>
        <fullName>Adracalin</fullName>
    </alternativeName>
</protein>
<sequence length="546" mass="59431">MCSLGLFPPPPPRGQVTLYEHNNELVTGNSYESPPPDFRGQWINLPVLHLTKDPLKAPGRLDHGTRTAFIHHREQVWKRCINVWHDVGLFGVLNEIANSEEEVFEWVKTACSWALALCGRASSLHGSLFPHLSLRSEDLIAEFAQVTNWSSCCLRVFAWHPHTNKFAVALLDDSIRVYNANSTIVPSLKHRLQRNVAALAWKPLSASVLAVACQSCILIWTLDPTSLSTRPSSGCAQVLSHPGHTPVTSLAWAPNGGWLLSASPVDAVILVWDVSTETCVPLPWFRGGGVTNLLWSPDGSKVLATTPSAVFRVWEAQMWTCEAWPTLSGRCQTGCWSPDGNRLLFTVLGEALIYSLSFPERCGTGKGHVGGAKSATIVADLSETTIQTPDGEERLGGEAHSMVWDPSGERLAVLMKGNPQVQDGNPVILLFRTRNSPVFELLPCGIIQGEPGAQAQLITFHPSFNKGALLSVCWSTGRITHIPLYFVNAQFPRFSPVLGRAQEPPAGGGGSIHEVPLFTETSPTSAPWDPLPGQSSAQPHSPHSHL</sequence>
<reference key="1">
    <citation type="journal article" date="2005" name="Science">
        <title>The transcriptional landscape of the mammalian genome.</title>
        <authorList>
            <person name="Carninci P."/>
            <person name="Kasukawa T."/>
            <person name="Katayama S."/>
            <person name="Gough J."/>
            <person name="Frith M.C."/>
            <person name="Maeda N."/>
            <person name="Oyama R."/>
            <person name="Ravasi T."/>
            <person name="Lenhard B."/>
            <person name="Wells C."/>
            <person name="Kodzius R."/>
            <person name="Shimokawa K."/>
            <person name="Bajic V.B."/>
            <person name="Brenner S.E."/>
            <person name="Batalov S."/>
            <person name="Forrest A.R."/>
            <person name="Zavolan M."/>
            <person name="Davis M.J."/>
            <person name="Wilming L.G."/>
            <person name="Aidinis V."/>
            <person name="Allen J.E."/>
            <person name="Ambesi-Impiombato A."/>
            <person name="Apweiler R."/>
            <person name="Aturaliya R.N."/>
            <person name="Bailey T.L."/>
            <person name="Bansal M."/>
            <person name="Baxter L."/>
            <person name="Beisel K.W."/>
            <person name="Bersano T."/>
            <person name="Bono H."/>
            <person name="Chalk A.M."/>
            <person name="Chiu K.P."/>
            <person name="Choudhary V."/>
            <person name="Christoffels A."/>
            <person name="Clutterbuck D.R."/>
            <person name="Crowe M.L."/>
            <person name="Dalla E."/>
            <person name="Dalrymple B.P."/>
            <person name="de Bono B."/>
            <person name="Della Gatta G."/>
            <person name="di Bernardo D."/>
            <person name="Down T."/>
            <person name="Engstrom P."/>
            <person name="Fagiolini M."/>
            <person name="Faulkner G."/>
            <person name="Fletcher C.F."/>
            <person name="Fukushima T."/>
            <person name="Furuno M."/>
            <person name="Futaki S."/>
            <person name="Gariboldi M."/>
            <person name="Georgii-Hemming P."/>
            <person name="Gingeras T.R."/>
            <person name="Gojobori T."/>
            <person name="Green R.E."/>
            <person name="Gustincich S."/>
            <person name="Harbers M."/>
            <person name="Hayashi Y."/>
            <person name="Hensch T.K."/>
            <person name="Hirokawa N."/>
            <person name="Hill D."/>
            <person name="Huminiecki L."/>
            <person name="Iacono M."/>
            <person name="Ikeo K."/>
            <person name="Iwama A."/>
            <person name="Ishikawa T."/>
            <person name="Jakt M."/>
            <person name="Kanapin A."/>
            <person name="Katoh M."/>
            <person name="Kawasawa Y."/>
            <person name="Kelso J."/>
            <person name="Kitamura H."/>
            <person name="Kitano H."/>
            <person name="Kollias G."/>
            <person name="Krishnan S.P."/>
            <person name="Kruger A."/>
            <person name="Kummerfeld S.K."/>
            <person name="Kurochkin I.V."/>
            <person name="Lareau L.F."/>
            <person name="Lazarevic D."/>
            <person name="Lipovich L."/>
            <person name="Liu J."/>
            <person name="Liuni S."/>
            <person name="McWilliam S."/>
            <person name="Madan Babu M."/>
            <person name="Madera M."/>
            <person name="Marchionni L."/>
            <person name="Matsuda H."/>
            <person name="Matsuzawa S."/>
            <person name="Miki H."/>
            <person name="Mignone F."/>
            <person name="Miyake S."/>
            <person name="Morris K."/>
            <person name="Mottagui-Tabar S."/>
            <person name="Mulder N."/>
            <person name="Nakano N."/>
            <person name="Nakauchi H."/>
            <person name="Ng P."/>
            <person name="Nilsson R."/>
            <person name="Nishiguchi S."/>
            <person name="Nishikawa S."/>
            <person name="Nori F."/>
            <person name="Ohara O."/>
            <person name="Okazaki Y."/>
            <person name="Orlando V."/>
            <person name="Pang K.C."/>
            <person name="Pavan W.J."/>
            <person name="Pavesi G."/>
            <person name="Pesole G."/>
            <person name="Petrovsky N."/>
            <person name="Piazza S."/>
            <person name="Reed J."/>
            <person name="Reid J.F."/>
            <person name="Ring B.Z."/>
            <person name="Ringwald M."/>
            <person name="Rost B."/>
            <person name="Ruan Y."/>
            <person name="Salzberg S.L."/>
            <person name="Sandelin A."/>
            <person name="Schneider C."/>
            <person name="Schoenbach C."/>
            <person name="Sekiguchi K."/>
            <person name="Semple C.A."/>
            <person name="Seno S."/>
            <person name="Sessa L."/>
            <person name="Sheng Y."/>
            <person name="Shibata Y."/>
            <person name="Shimada H."/>
            <person name="Shimada K."/>
            <person name="Silva D."/>
            <person name="Sinclair B."/>
            <person name="Sperling S."/>
            <person name="Stupka E."/>
            <person name="Sugiura K."/>
            <person name="Sultana R."/>
            <person name="Takenaka Y."/>
            <person name="Taki K."/>
            <person name="Tammoja K."/>
            <person name="Tan S.L."/>
            <person name="Tang S."/>
            <person name="Taylor M.S."/>
            <person name="Tegner J."/>
            <person name="Teichmann S.A."/>
            <person name="Ueda H.R."/>
            <person name="van Nimwegen E."/>
            <person name="Verardo R."/>
            <person name="Wei C.L."/>
            <person name="Yagi K."/>
            <person name="Yamanishi H."/>
            <person name="Zabarovsky E."/>
            <person name="Zhu S."/>
            <person name="Zimmer A."/>
            <person name="Hide W."/>
            <person name="Bult C."/>
            <person name="Grimmond S.M."/>
            <person name="Teasdale R.D."/>
            <person name="Liu E.T."/>
            <person name="Brusic V."/>
            <person name="Quackenbush J."/>
            <person name="Wahlestedt C."/>
            <person name="Mattick J.S."/>
            <person name="Hume D.A."/>
            <person name="Kai C."/>
            <person name="Sasaki D."/>
            <person name="Tomaru Y."/>
            <person name="Fukuda S."/>
            <person name="Kanamori-Katayama M."/>
            <person name="Suzuki M."/>
            <person name="Aoki J."/>
            <person name="Arakawa T."/>
            <person name="Iida J."/>
            <person name="Imamura K."/>
            <person name="Itoh M."/>
            <person name="Kato T."/>
            <person name="Kawaji H."/>
            <person name="Kawagashira N."/>
            <person name="Kawashima T."/>
            <person name="Kojima M."/>
            <person name="Kondo S."/>
            <person name="Konno H."/>
            <person name="Nakano K."/>
            <person name="Ninomiya N."/>
            <person name="Nishio T."/>
            <person name="Okada M."/>
            <person name="Plessy C."/>
            <person name="Shibata K."/>
            <person name="Shiraki T."/>
            <person name="Suzuki S."/>
            <person name="Tagami M."/>
            <person name="Waki K."/>
            <person name="Watahiki A."/>
            <person name="Okamura-Oho Y."/>
            <person name="Suzuki H."/>
            <person name="Kawai J."/>
            <person name="Hayashizaki Y."/>
        </authorList>
    </citation>
    <scope>NUCLEOTIDE SEQUENCE [LARGE SCALE MRNA]</scope>
    <source>
        <strain>C57BL/6J</strain>
        <tissue>Embryo</tissue>
        <tissue>Lung</tissue>
        <tissue>Spleen</tissue>
        <tissue>Testis</tissue>
    </source>
</reference>
<reference key="2">
    <citation type="journal article" date="2004" name="Genome Res.">
        <title>The status, quality, and expansion of the NIH full-length cDNA project: the Mammalian Gene Collection (MGC).</title>
        <authorList>
            <consortium name="The MGC Project Team"/>
        </authorList>
    </citation>
    <scope>NUCLEOTIDE SEQUENCE [LARGE SCALE MRNA]</scope>
</reference>
<reference key="3">
    <citation type="journal article" date="2009" name="Mol. Cell. Proteomics">
        <title>Large scale localization of protein phosphorylation by use of electron capture dissociation mass spectrometry.</title>
        <authorList>
            <person name="Sweet S.M."/>
            <person name="Bailey C.M."/>
            <person name="Cunningham D.L."/>
            <person name="Heath J.K."/>
            <person name="Cooper H.J."/>
        </authorList>
    </citation>
    <scope>PHOSPHORYLATION [LARGE SCALE ANALYSIS] AT SER-495</scope>
    <scope>IDENTIFICATION BY MASS SPECTROMETRY [LARGE SCALE ANALYSIS]</scope>
    <source>
        <tissue>Embryonic fibroblast</tissue>
    </source>
</reference>
<reference key="4">
    <citation type="journal article" date="2010" name="Cell">
        <title>A tissue-specific atlas of mouse protein phosphorylation and expression.</title>
        <authorList>
            <person name="Huttlin E.L."/>
            <person name="Jedrychowski M.P."/>
            <person name="Elias J.E."/>
            <person name="Goswami T."/>
            <person name="Rad R."/>
            <person name="Beausoleil S.A."/>
            <person name="Villen J."/>
            <person name="Haas W."/>
            <person name="Sowa M.E."/>
            <person name="Gygi S.P."/>
        </authorList>
    </citation>
    <scope>PHOSPHORYLATION [LARGE SCALE ANALYSIS] AT SER-495; SER-511; SER-522; SER-525 AND SER-541</scope>
    <scope>IDENTIFICATION BY MASS SPECTROMETRY [LARGE SCALE ANALYSIS]</scope>
    <source>
        <tissue>Brain</tissue>
        <tissue>Brown adipose tissue</tissue>
        <tissue>Kidney</tissue>
        <tissue>Liver</tissue>
        <tissue>Lung</tissue>
        <tissue>Spleen</tissue>
        <tissue>Testis</tissue>
    </source>
</reference>
<reference key="5">
    <citation type="journal article" date="2016" name="Biol. Open">
        <title>Identification of a novel putative interaction partner of the nucleoporin ALADIN.</title>
        <authorList>
            <person name="Juehlen R."/>
            <person name="Landgraf D."/>
            <person name="Huebner A."/>
            <person name="Koehler K."/>
        </authorList>
    </citation>
    <scope>DISRUPTION PHENOTYPE</scope>
</reference>
<proteinExistence type="evidence at protein level"/>
<evidence type="ECO:0000250" key="1">
    <source>
        <dbReference type="UniProtKB" id="Q9NRG9"/>
    </source>
</evidence>
<evidence type="ECO:0000255" key="2"/>
<evidence type="ECO:0000256" key="3">
    <source>
        <dbReference type="SAM" id="MobiDB-lite"/>
    </source>
</evidence>
<evidence type="ECO:0000269" key="4">
    <source>
    </source>
</evidence>
<evidence type="ECO:0007744" key="5">
    <source>
    </source>
</evidence>
<evidence type="ECO:0007744" key="6">
    <source>
    </source>
</evidence>